<evidence type="ECO:0000256" key="1">
    <source>
        <dbReference type="SAM" id="MobiDB-lite"/>
    </source>
</evidence>
<evidence type="ECO:0000305" key="2"/>
<keyword id="KW-0040">ANK repeat</keyword>
<keyword id="KW-1185">Reference proteome</keyword>
<keyword id="KW-0677">Repeat</keyword>
<proteinExistence type="evidence at transcript level"/>
<gene>
    <name type="primary">Ankrd10</name>
</gene>
<name>ANR10_MOUSE</name>
<sequence length="415" mass="43975">MSAGAGAAVEAGFSSEELLSLRFPLHRACRDGDLVALCSLLPHTPRAHLAAEDSFYGWTPVHWAAHFGKLECLMQLVRAGASLNVSTTRYAQTPAHIAAFGGHPQCLVWLIQAGANINKPDCEGETPIHKAARSGSLECITALVGSGAHTDLRNASGLTAADIAQTQGFQECTQFLLSLQNHQMSRFCHNGTLSGGHESILPTHVSLGTNRKRCLEDSESLGVKKARTRVPSLDHAMPLANGEAEDDADRMHVDRECAAVSDMKNSSSVLNTLTNGSVVNGHLDFPCANQLNGMESRSHPCLTGSNGVSNGQPLSSGQASVSANGTEEPEKTMGINPEMCGSLHLNGSPSSCVASRPSWVGDIGESLHYGHYHGFGDTAESIPELSSVLEHTSCVRVEQRYDSAVLGAMQLHHGS</sequence>
<organism>
    <name type="scientific">Mus musculus</name>
    <name type="common">Mouse</name>
    <dbReference type="NCBI Taxonomy" id="10090"/>
    <lineage>
        <taxon>Eukaryota</taxon>
        <taxon>Metazoa</taxon>
        <taxon>Chordata</taxon>
        <taxon>Craniata</taxon>
        <taxon>Vertebrata</taxon>
        <taxon>Euteleostomi</taxon>
        <taxon>Mammalia</taxon>
        <taxon>Eutheria</taxon>
        <taxon>Euarchontoglires</taxon>
        <taxon>Glires</taxon>
        <taxon>Rodentia</taxon>
        <taxon>Myomorpha</taxon>
        <taxon>Muroidea</taxon>
        <taxon>Muridae</taxon>
        <taxon>Murinae</taxon>
        <taxon>Mus</taxon>
        <taxon>Mus</taxon>
    </lineage>
</organism>
<accession>Q99LW0</accession>
<accession>Q8BGB6</accession>
<feature type="chain" id="PRO_0000066906" description="Ankyrin repeat domain-containing protein 10">
    <location>
        <begin position="1"/>
        <end position="415"/>
    </location>
</feature>
<feature type="repeat" description="ANK 1">
    <location>
        <begin position="20"/>
        <end position="49"/>
    </location>
</feature>
<feature type="repeat" description="ANK 2">
    <location>
        <begin position="56"/>
        <end position="85"/>
    </location>
</feature>
<feature type="repeat" description="ANK 3">
    <location>
        <begin position="90"/>
        <end position="119"/>
    </location>
</feature>
<feature type="repeat" description="ANK 4">
    <location>
        <begin position="123"/>
        <end position="152"/>
    </location>
</feature>
<feature type="region of interest" description="Disordered" evidence="1">
    <location>
        <begin position="303"/>
        <end position="330"/>
    </location>
</feature>
<feature type="compositionally biased region" description="Polar residues" evidence="1">
    <location>
        <begin position="303"/>
        <end position="325"/>
    </location>
</feature>
<feature type="sequence conflict" description="In Ref. 2; AAH02198." evidence="2" ref="2">
    <original>A</original>
    <variation>V</variation>
    <location>
        <position position="7"/>
    </location>
</feature>
<protein>
    <recommendedName>
        <fullName>Ankyrin repeat domain-containing protein 10</fullName>
    </recommendedName>
</protein>
<reference key="1">
    <citation type="journal article" date="2005" name="Science">
        <title>The transcriptional landscape of the mammalian genome.</title>
        <authorList>
            <person name="Carninci P."/>
            <person name="Kasukawa T."/>
            <person name="Katayama S."/>
            <person name="Gough J."/>
            <person name="Frith M.C."/>
            <person name="Maeda N."/>
            <person name="Oyama R."/>
            <person name="Ravasi T."/>
            <person name="Lenhard B."/>
            <person name="Wells C."/>
            <person name="Kodzius R."/>
            <person name="Shimokawa K."/>
            <person name="Bajic V.B."/>
            <person name="Brenner S.E."/>
            <person name="Batalov S."/>
            <person name="Forrest A.R."/>
            <person name="Zavolan M."/>
            <person name="Davis M.J."/>
            <person name="Wilming L.G."/>
            <person name="Aidinis V."/>
            <person name="Allen J.E."/>
            <person name="Ambesi-Impiombato A."/>
            <person name="Apweiler R."/>
            <person name="Aturaliya R.N."/>
            <person name="Bailey T.L."/>
            <person name="Bansal M."/>
            <person name="Baxter L."/>
            <person name="Beisel K.W."/>
            <person name="Bersano T."/>
            <person name="Bono H."/>
            <person name="Chalk A.M."/>
            <person name="Chiu K.P."/>
            <person name="Choudhary V."/>
            <person name="Christoffels A."/>
            <person name="Clutterbuck D.R."/>
            <person name="Crowe M.L."/>
            <person name="Dalla E."/>
            <person name="Dalrymple B.P."/>
            <person name="de Bono B."/>
            <person name="Della Gatta G."/>
            <person name="di Bernardo D."/>
            <person name="Down T."/>
            <person name="Engstrom P."/>
            <person name="Fagiolini M."/>
            <person name="Faulkner G."/>
            <person name="Fletcher C.F."/>
            <person name="Fukushima T."/>
            <person name="Furuno M."/>
            <person name="Futaki S."/>
            <person name="Gariboldi M."/>
            <person name="Georgii-Hemming P."/>
            <person name="Gingeras T.R."/>
            <person name="Gojobori T."/>
            <person name="Green R.E."/>
            <person name="Gustincich S."/>
            <person name="Harbers M."/>
            <person name="Hayashi Y."/>
            <person name="Hensch T.K."/>
            <person name="Hirokawa N."/>
            <person name="Hill D."/>
            <person name="Huminiecki L."/>
            <person name="Iacono M."/>
            <person name="Ikeo K."/>
            <person name="Iwama A."/>
            <person name="Ishikawa T."/>
            <person name="Jakt M."/>
            <person name="Kanapin A."/>
            <person name="Katoh M."/>
            <person name="Kawasawa Y."/>
            <person name="Kelso J."/>
            <person name="Kitamura H."/>
            <person name="Kitano H."/>
            <person name="Kollias G."/>
            <person name="Krishnan S.P."/>
            <person name="Kruger A."/>
            <person name="Kummerfeld S.K."/>
            <person name="Kurochkin I.V."/>
            <person name="Lareau L.F."/>
            <person name="Lazarevic D."/>
            <person name="Lipovich L."/>
            <person name="Liu J."/>
            <person name="Liuni S."/>
            <person name="McWilliam S."/>
            <person name="Madan Babu M."/>
            <person name="Madera M."/>
            <person name="Marchionni L."/>
            <person name="Matsuda H."/>
            <person name="Matsuzawa S."/>
            <person name="Miki H."/>
            <person name="Mignone F."/>
            <person name="Miyake S."/>
            <person name="Morris K."/>
            <person name="Mottagui-Tabar S."/>
            <person name="Mulder N."/>
            <person name="Nakano N."/>
            <person name="Nakauchi H."/>
            <person name="Ng P."/>
            <person name="Nilsson R."/>
            <person name="Nishiguchi S."/>
            <person name="Nishikawa S."/>
            <person name="Nori F."/>
            <person name="Ohara O."/>
            <person name="Okazaki Y."/>
            <person name="Orlando V."/>
            <person name="Pang K.C."/>
            <person name="Pavan W.J."/>
            <person name="Pavesi G."/>
            <person name="Pesole G."/>
            <person name="Petrovsky N."/>
            <person name="Piazza S."/>
            <person name="Reed J."/>
            <person name="Reid J.F."/>
            <person name="Ring B.Z."/>
            <person name="Ringwald M."/>
            <person name="Rost B."/>
            <person name="Ruan Y."/>
            <person name="Salzberg S.L."/>
            <person name="Sandelin A."/>
            <person name="Schneider C."/>
            <person name="Schoenbach C."/>
            <person name="Sekiguchi K."/>
            <person name="Semple C.A."/>
            <person name="Seno S."/>
            <person name="Sessa L."/>
            <person name="Sheng Y."/>
            <person name="Shibata Y."/>
            <person name="Shimada H."/>
            <person name="Shimada K."/>
            <person name="Silva D."/>
            <person name="Sinclair B."/>
            <person name="Sperling S."/>
            <person name="Stupka E."/>
            <person name="Sugiura K."/>
            <person name="Sultana R."/>
            <person name="Takenaka Y."/>
            <person name="Taki K."/>
            <person name="Tammoja K."/>
            <person name="Tan S.L."/>
            <person name="Tang S."/>
            <person name="Taylor M.S."/>
            <person name="Tegner J."/>
            <person name="Teichmann S.A."/>
            <person name="Ueda H.R."/>
            <person name="van Nimwegen E."/>
            <person name="Verardo R."/>
            <person name="Wei C.L."/>
            <person name="Yagi K."/>
            <person name="Yamanishi H."/>
            <person name="Zabarovsky E."/>
            <person name="Zhu S."/>
            <person name="Zimmer A."/>
            <person name="Hide W."/>
            <person name="Bult C."/>
            <person name="Grimmond S.M."/>
            <person name="Teasdale R.D."/>
            <person name="Liu E.T."/>
            <person name="Brusic V."/>
            <person name="Quackenbush J."/>
            <person name="Wahlestedt C."/>
            <person name="Mattick J.S."/>
            <person name="Hume D.A."/>
            <person name="Kai C."/>
            <person name="Sasaki D."/>
            <person name="Tomaru Y."/>
            <person name="Fukuda S."/>
            <person name="Kanamori-Katayama M."/>
            <person name="Suzuki M."/>
            <person name="Aoki J."/>
            <person name="Arakawa T."/>
            <person name="Iida J."/>
            <person name="Imamura K."/>
            <person name="Itoh M."/>
            <person name="Kato T."/>
            <person name="Kawaji H."/>
            <person name="Kawagashira N."/>
            <person name="Kawashima T."/>
            <person name="Kojima M."/>
            <person name="Kondo S."/>
            <person name="Konno H."/>
            <person name="Nakano K."/>
            <person name="Ninomiya N."/>
            <person name="Nishio T."/>
            <person name="Okada M."/>
            <person name="Plessy C."/>
            <person name="Shibata K."/>
            <person name="Shiraki T."/>
            <person name="Suzuki S."/>
            <person name="Tagami M."/>
            <person name="Waki K."/>
            <person name="Watahiki A."/>
            <person name="Okamura-Oho Y."/>
            <person name="Suzuki H."/>
            <person name="Kawai J."/>
            <person name="Hayashizaki Y."/>
        </authorList>
    </citation>
    <scope>NUCLEOTIDE SEQUENCE [LARGE SCALE MRNA]</scope>
    <source>
        <strain>C57BL/6J</strain>
        <strain>NOD</strain>
        <tissue>Thymus</tissue>
    </source>
</reference>
<reference key="2">
    <citation type="submission" date="2005-07" db="EMBL/GenBank/DDBJ databases">
        <authorList>
            <person name="Mural R.J."/>
            <person name="Adams M.D."/>
            <person name="Myers E.W."/>
            <person name="Smith H.O."/>
            <person name="Venter J.C."/>
        </authorList>
    </citation>
    <scope>NUCLEOTIDE SEQUENCE [LARGE SCALE GENOMIC DNA]</scope>
</reference>
<reference key="3">
    <citation type="journal article" date="2004" name="Genome Res.">
        <title>The status, quality, and expansion of the NIH full-length cDNA project: the Mammalian Gene Collection (MGC).</title>
        <authorList>
            <consortium name="The MGC Project Team"/>
        </authorList>
    </citation>
    <scope>NUCLEOTIDE SEQUENCE [LARGE SCALE MRNA]</scope>
</reference>
<dbReference type="EMBL" id="AK082875">
    <property type="protein sequence ID" value="BAC38664.1"/>
    <property type="molecule type" value="mRNA"/>
</dbReference>
<dbReference type="EMBL" id="AK088371">
    <property type="protein sequence ID" value="BAC40310.1"/>
    <property type="molecule type" value="mRNA"/>
</dbReference>
<dbReference type="EMBL" id="CH466566">
    <property type="protein sequence ID" value="EDL22072.1"/>
    <property type="molecule type" value="Genomic_DNA"/>
</dbReference>
<dbReference type="EMBL" id="BC002198">
    <property type="protein sequence ID" value="AAH02198.1"/>
    <property type="molecule type" value="mRNA"/>
</dbReference>
<dbReference type="CCDS" id="CCDS22098.1"/>
<dbReference type="RefSeq" id="NP_001268903.1">
    <property type="nucleotide sequence ID" value="NM_001281974.1"/>
</dbReference>
<dbReference type="RefSeq" id="NP_598732.2">
    <property type="nucleotide sequence ID" value="NM_133971.3"/>
</dbReference>
<dbReference type="SMR" id="Q99LW0"/>
<dbReference type="FunCoup" id="Q99LW0">
    <property type="interactions" value="2079"/>
</dbReference>
<dbReference type="STRING" id="10090.ENSMUSP00000033905"/>
<dbReference type="iPTMnet" id="Q99LW0"/>
<dbReference type="PhosphoSitePlus" id="Q99LW0"/>
<dbReference type="PaxDb" id="10090-ENSMUSP00000033905"/>
<dbReference type="ProteomicsDB" id="296253"/>
<dbReference type="Antibodypedia" id="67648">
    <property type="antibodies" value="52 antibodies from 15 providers"/>
</dbReference>
<dbReference type="DNASU" id="102334"/>
<dbReference type="Ensembl" id="ENSMUST00000033905.13">
    <property type="protein sequence ID" value="ENSMUSP00000033905.6"/>
    <property type="gene ID" value="ENSMUSG00000031508.15"/>
</dbReference>
<dbReference type="GeneID" id="102334"/>
<dbReference type="KEGG" id="mmu:102334"/>
<dbReference type="UCSC" id="uc009kvo.3">
    <property type="organism name" value="mouse"/>
</dbReference>
<dbReference type="AGR" id="MGI:1921840"/>
<dbReference type="CTD" id="55608"/>
<dbReference type="MGI" id="MGI:1921840">
    <property type="gene designation" value="Ankrd10"/>
</dbReference>
<dbReference type="VEuPathDB" id="HostDB:ENSMUSG00000031508"/>
<dbReference type="eggNOG" id="KOG0504">
    <property type="taxonomic scope" value="Eukaryota"/>
</dbReference>
<dbReference type="GeneTree" id="ENSGT00940000156564"/>
<dbReference type="HOGENOM" id="CLU_052448_0_0_1"/>
<dbReference type="InParanoid" id="Q99LW0"/>
<dbReference type="OMA" id="ILNGVHQ"/>
<dbReference type="OrthoDB" id="5402602at2759"/>
<dbReference type="PhylomeDB" id="Q99LW0"/>
<dbReference type="TreeFam" id="TF330752"/>
<dbReference type="BioGRID-ORCS" id="102334">
    <property type="hits" value="2 hits in 77 CRISPR screens"/>
</dbReference>
<dbReference type="ChiTaRS" id="Ankrd10">
    <property type="organism name" value="mouse"/>
</dbReference>
<dbReference type="PRO" id="PR:Q99LW0"/>
<dbReference type="Proteomes" id="UP000000589">
    <property type="component" value="Chromosome 8"/>
</dbReference>
<dbReference type="RNAct" id="Q99LW0">
    <property type="molecule type" value="protein"/>
</dbReference>
<dbReference type="Bgee" id="ENSMUSG00000031508">
    <property type="expression patterns" value="Expressed in optic fissure and 266 other cell types or tissues"/>
</dbReference>
<dbReference type="ExpressionAtlas" id="Q99LW0">
    <property type="expression patterns" value="baseline and differential"/>
</dbReference>
<dbReference type="GO" id="GO:0005654">
    <property type="term" value="C:nucleoplasm"/>
    <property type="evidence" value="ECO:0007669"/>
    <property type="project" value="Ensembl"/>
</dbReference>
<dbReference type="Gene3D" id="1.25.40.20">
    <property type="entry name" value="Ankyrin repeat-containing domain"/>
    <property type="match status" value="1"/>
</dbReference>
<dbReference type="InterPro" id="IPR050776">
    <property type="entry name" value="Ank_Repeat/CDKN_Inhibitor"/>
</dbReference>
<dbReference type="InterPro" id="IPR002110">
    <property type="entry name" value="Ankyrin_rpt"/>
</dbReference>
<dbReference type="InterPro" id="IPR036770">
    <property type="entry name" value="Ankyrin_rpt-contain_sf"/>
</dbReference>
<dbReference type="PANTHER" id="PTHR24201">
    <property type="entry name" value="ANK_REP_REGION DOMAIN-CONTAINING PROTEIN"/>
    <property type="match status" value="1"/>
</dbReference>
<dbReference type="PANTHER" id="PTHR24201:SF2">
    <property type="entry name" value="ANKYRIN REPEAT DOMAIN-CONTAINING PROTEIN 42"/>
    <property type="match status" value="1"/>
</dbReference>
<dbReference type="Pfam" id="PF00023">
    <property type="entry name" value="Ank"/>
    <property type="match status" value="1"/>
</dbReference>
<dbReference type="Pfam" id="PF12796">
    <property type="entry name" value="Ank_2"/>
    <property type="match status" value="1"/>
</dbReference>
<dbReference type="SMART" id="SM00248">
    <property type="entry name" value="ANK"/>
    <property type="match status" value="3"/>
</dbReference>
<dbReference type="SUPFAM" id="SSF48403">
    <property type="entry name" value="Ankyrin repeat"/>
    <property type="match status" value="1"/>
</dbReference>
<dbReference type="PROSITE" id="PS50297">
    <property type="entry name" value="ANK_REP_REGION"/>
    <property type="match status" value="1"/>
</dbReference>
<dbReference type="PROSITE" id="PS50088">
    <property type="entry name" value="ANK_REPEAT"/>
    <property type="match status" value="3"/>
</dbReference>